<evidence type="ECO:0000250" key="1"/>
<evidence type="ECO:0000255" key="2">
    <source>
        <dbReference type="HAMAP-Rule" id="MF_00118"/>
    </source>
</evidence>
<protein>
    <recommendedName>
        <fullName evidence="2">Elongation factor Tu</fullName>
        <shortName evidence="2">EF-Tu</shortName>
        <ecNumber evidence="2">3.6.5.3</ecNumber>
    </recommendedName>
</protein>
<proteinExistence type="inferred from homology"/>
<dbReference type="EC" id="3.6.5.3" evidence="2"/>
<dbReference type="EMBL" id="CP000680">
    <property type="protein sequence ID" value="ABP86658.1"/>
    <property type="molecule type" value="Genomic_DNA"/>
</dbReference>
<dbReference type="EMBL" id="CP000680">
    <property type="protein sequence ID" value="ABP86670.1"/>
    <property type="molecule type" value="Genomic_DNA"/>
</dbReference>
<dbReference type="SMR" id="A4XZ92"/>
<dbReference type="STRING" id="399739.Pmen_3911"/>
<dbReference type="KEGG" id="pmy:Pmen_3911"/>
<dbReference type="KEGG" id="pmy:Pmen_3923"/>
<dbReference type="PATRIC" id="fig|399739.8.peg.3976"/>
<dbReference type="eggNOG" id="COG0050">
    <property type="taxonomic scope" value="Bacteria"/>
</dbReference>
<dbReference type="HOGENOM" id="CLU_007265_0_2_6"/>
<dbReference type="OrthoDB" id="9803139at2"/>
<dbReference type="GO" id="GO:0005829">
    <property type="term" value="C:cytosol"/>
    <property type="evidence" value="ECO:0007669"/>
    <property type="project" value="TreeGrafter"/>
</dbReference>
<dbReference type="GO" id="GO:0005525">
    <property type="term" value="F:GTP binding"/>
    <property type="evidence" value="ECO:0007669"/>
    <property type="project" value="UniProtKB-UniRule"/>
</dbReference>
<dbReference type="GO" id="GO:0003924">
    <property type="term" value="F:GTPase activity"/>
    <property type="evidence" value="ECO:0007669"/>
    <property type="project" value="InterPro"/>
</dbReference>
<dbReference type="GO" id="GO:0097216">
    <property type="term" value="F:guanosine tetraphosphate binding"/>
    <property type="evidence" value="ECO:0007669"/>
    <property type="project" value="UniProtKB-ARBA"/>
</dbReference>
<dbReference type="GO" id="GO:0003746">
    <property type="term" value="F:translation elongation factor activity"/>
    <property type="evidence" value="ECO:0007669"/>
    <property type="project" value="UniProtKB-UniRule"/>
</dbReference>
<dbReference type="CDD" id="cd01884">
    <property type="entry name" value="EF_Tu"/>
    <property type="match status" value="1"/>
</dbReference>
<dbReference type="CDD" id="cd03697">
    <property type="entry name" value="EFTU_II"/>
    <property type="match status" value="1"/>
</dbReference>
<dbReference type="CDD" id="cd03707">
    <property type="entry name" value="EFTU_III"/>
    <property type="match status" value="1"/>
</dbReference>
<dbReference type="FunFam" id="2.40.30.10:FF:000001">
    <property type="entry name" value="Elongation factor Tu"/>
    <property type="match status" value="1"/>
</dbReference>
<dbReference type="FunFam" id="3.40.50.300:FF:000003">
    <property type="entry name" value="Elongation factor Tu"/>
    <property type="match status" value="1"/>
</dbReference>
<dbReference type="Gene3D" id="3.40.50.300">
    <property type="entry name" value="P-loop containing nucleotide triphosphate hydrolases"/>
    <property type="match status" value="1"/>
</dbReference>
<dbReference type="Gene3D" id="2.40.30.10">
    <property type="entry name" value="Translation factors"/>
    <property type="match status" value="2"/>
</dbReference>
<dbReference type="HAMAP" id="MF_00118_B">
    <property type="entry name" value="EF_Tu_B"/>
    <property type="match status" value="1"/>
</dbReference>
<dbReference type="InterPro" id="IPR041709">
    <property type="entry name" value="EF-Tu_GTP-bd"/>
</dbReference>
<dbReference type="InterPro" id="IPR050055">
    <property type="entry name" value="EF-Tu_GTPase"/>
</dbReference>
<dbReference type="InterPro" id="IPR004161">
    <property type="entry name" value="EFTu-like_2"/>
</dbReference>
<dbReference type="InterPro" id="IPR033720">
    <property type="entry name" value="EFTU_2"/>
</dbReference>
<dbReference type="InterPro" id="IPR031157">
    <property type="entry name" value="G_TR_CS"/>
</dbReference>
<dbReference type="InterPro" id="IPR027417">
    <property type="entry name" value="P-loop_NTPase"/>
</dbReference>
<dbReference type="InterPro" id="IPR005225">
    <property type="entry name" value="Small_GTP-bd"/>
</dbReference>
<dbReference type="InterPro" id="IPR000795">
    <property type="entry name" value="T_Tr_GTP-bd_dom"/>
</dbReference>
<dbReference type="InterPro" id="IPR009000">
    <property type="entry name" value="Transl_B-barrel_sf"/>
</dbReference>
<dbReference type="InterPro" id="IPR009001">
    <property type="entry name" value="Transl_elong_EF1A/Init_IF2_C"/>
</dbReference>
<dbReference type="InterPro" id="IPR004541">
    <property type="entry name" value="Transl_elong_EFTu/EF1A_bac/org"/>
</dbReference>
<dbReference type="InterPro" id="IPR004160">
    <property type="entry name" value="Transl_elong_EFTu/EF1A_C"/>
</dbReference>
<dbReference type="NCBIfam" id="TIGR00485">
    <property type="entry name" value="EF-Tu"/>
    <property type="match status" value="1"/>
</dbReference>
<dbReference type="NCBIfam" id="NF000766">
    <property type="entry name" value="PRK00049.1"/>
    <property type="match status" value="1"/>
</dbReference>
<dbReference type="NCBIfam" id="NF009372">
    <property type="entry name" value="PRK12735.1"/>
    <property type="match status" value="1"/>
</dbReference>
<dbReference type="NCBIfam" id="NF009373">
    <property type="entry name" value="PRK12736.1"/>
    <property type="match status" value="1"/>
</dbReference>
<dbReference type="NCBIfam" id="TIGR00231">
    <property type="entry name" value="small_GTP"/>
    <property type="match status" value="1"/>
</dbReference>
<dbReference type="PANTHER" id="PTHR43721:SF22">
    <property type="entry name" value="ELONGATION FACTOR TU, MITOCHONDRIAL"/>
    <property type="match status" value="1"/>
</dbReference>
<dbReference type="PANTHER" id="PTHR43721">
    <property type="entry name" value="ELONGATION FACTOR TU-RELATED"/>
    <property type="match status" value="1"/>
</dbReference>
<dbReference type="Pfam" id="PF00009">
    <property type="entry name" value="GTP_EFTU"/>
    <property type="match status" value="1"/>
</dbReference>
<dbReference type="Pfam" id="PF03144">
    <property type="entry name" value="GTP_EFTU_D2"/>
    <property type="match status" value="1"/>
</dbReference>
<dbReference type="Pfam" id="PF03143">
    <property type="entry name" value="GTP_EFTU_D3"/>
    <property type="match status" value="1"/>
</dbReference>
<dbReference type="PRINTS" id="PR00315">
    <property type="entry name" value="ELONGATNFCT"/>
</dbReference>
<dbReference type="SUPFAM" id="SSF50465">
    <property type="entry name" value="EF-Tu/eEF-1alpha/eIF2-gamma C-terminal domain"/>
    <property type="match status" value="1"/>
</dbReference>
<dbReference type="SUPFAM" id="SSF52540">
    <property type="entry name" value="P-loop containing nucleoside triphosphate hydrolases"/>
    <property type="match status" value="1"/>
</dbReference>
<dbReference type="SUPFAM" id="SSF50447">
    <property type="entry name" value="Translation proteins"/>
    <property type="match status" value="1"/>
</dbReference>
<dbReference type="PROSITE" id="PS00301">
    <property type="entry name" value="G_TR_1"/>
    <property type="match status" value="1"/>
</dbReference>
<dbReference type="PROSITE" id="PS51722">
    <property type="entry name" value="G_TR_2"/>
    <property type="match status" value="1"/>
</dbReference>
<sequence>MAKEKFERNKPHVNVGTIGHVDHGKTTLTAALTRVCSEVFGSARVDFDKIDSAPEEKARGITINTAHVEYDSNIRHYAHVDCPGHADYVKNMITGAAQMDGAILVCSAADGPMPQTREHILLSRQVGVPYIVVFLNKADMVDDAELLELVEMEVRDLLSTYDFPGDDTPIIIGSALMALNGEDTNELGTSAVKKLVETLDTYIPEPVRAIDRPFLMPIEDVFSISGRGTVVTGRVERGIVKIQEEIEIVGLRPTTKTTCTGVEMFRKLLDEGRAGENCGVLLRGTKRDEVERGQVLAKPGTIKPHTKFEAEVYVLSKEEGGRHTPFFKGYRPQFYFRTTDVTGSCELPEGVEMVMPGDNIKMVVTLIKPIAMEDGLRFAIREGGRTVGAGVVAKIIE</sequence>
<name>EFTU_ECTM1</name>
<accession>A4XZ92</accession>
<gene>
    <name evidence="2" type="primary">tuf</name>
    <name type="ordered locus">Pmen_3911</name>
    <name type="ordered locus">Pmen_3923</name>
</gene>
<keyword id="KW-0963">Cytoplasm</keyword>
<keyword id="KW-0251">Elongation factor</keyword>
<keyword id="KW-0342">GTP-binding</keyword>
<keyword id="KW-0378">Hydrolase</keyword>
<keyword id="KW-0460">Magnesium</keyword>
<keyword id="KW-0479">Metal-binding</keyword>
<keyword id="KW-0547">Nucleotide-binding</keyword>
<keyword id="KW-0648">Protein biosynthesis</keyword>
<comment type="function">
    <text evidence="2">GTP hydrolase that promotes the GTP-dependent binding of aminoacyl-tRNA to the A-site of ribosomes during protein biosynthesis.</text>
</comment>
<comment type="catalytic activity">
    <reaction evidence="2">
        <text>GTP + H2O = GDP + phosphate + H(+)</text>
        <dbReference type="Rhea" id="RHEA:19669"/>
        <dbReference type="ChEBI" id="CHEBI:15377"/>
        <dbReference type="ChEBI" id="CHEBI:15378"/>
        <dbReference type="ChEBI" id="CHEBI:37565"/>
        <dbReference type="ChEBI" id="CHEBI:43474"/>
        <dbReference type="ChEBI" id="CHEBI:58189"/>
        <dbReference type="EC" id="3.6.5.3"/>
    </reaction>
    <physiologicalReaction direction="left-to-right" evidence="2">
        <dbReference type="Rhea" id="RHEA:19670"/>
    </physiologicalReaction>
</comment>
<comment type="subunit">
    <text evidence="2">Monomer.</text>
</comment>
<comment type="subcellular location">
    <subcellularLocation>
        <location evidence="2">Cytoplasm</location>
    </subcellularLocation>
</comment>
<comment type="similarity">
    <text evidence="2">Belongs to the TRAFAC class translation factor GTPase superfamily. Classic translation factor GTPase family. EF-Tu/EF-1A subfamily.</text>
</comment>
<reference key="1">
    <citation type="submission" date="2007-04" db="EMBL/GenBank/DDBJ databases">
        <title>Complete sequence of Pseudomonas mendocina ymp.</title>
        <authorList>
            <consortium name="US DOE Joint Genome Institute"/>
            <person name="Copeland A."/>
            <person name="Lucas S."/>
            <person name="Lapidus A."/>
            <person name="Barry K."/>
            <person name="Glavina del Rio T."/>
            <person name="Dalin E."/>
            <person name="Tice H."/>
            <person name="Pitluck S."/>
            <person name="Kiss H."/>
            <person name="Brettin T."/>
            <person name="Detter J.C."/>
            <person name="Bruce D."/>
            <person name="Han C."/>
            <person name="Schmutz J."/>
            <person name="Larimer F."/>
            <person name="Land M."/>
            <person name="Hauser L."/>
            <person name="Kyrpides N."/>
            <person name="Mikhailova N."/>
            <person name="Hersman L."/>
            <person name="Dubois J."/>
            <person name="Maurice P."/>
            <person name="Richardson P."/>
        </authorList>
    </citation>
    <scope>NUCLEOTIDE SEQUENCE [LARGE SCALE GENOMIC DNA]</scope>
    <source>
        <strain>ymp</strain>
    </source>
</reference>
<organism>
    <name type="scientific">Ectopseudomonas mendocina (strain ymp)</name>
    <name type="common">Pseudomonas mendocina</name>
    <dbReference type="NCBI Taxonomy" id="399739"/>
    <lineage>
        <taxon>Bacteria</taxon>
        <taxon>Pseudomonadati</taxon>
        <taxon>Pseudomonadota</taxon>
        <taxon>Gammaproteobacteria</taxon>
        <taxon>Pseudomonadales</taxon>
        <taxon>Pseudomonadaceae</taxon>
        <taxon>Ectopseudomonas</taxon>
    </lineage>
</organism>
<feature type="chain" id="PRO_1000015734" description="Elongation factor Tu">
    <location>
        <begin position="1"/>
        <end position="397"/>
    </location>
</feature>
<feature type="domain" description="tr-type G">
    <location>
        <begin position="10"/>
        <end position="207"/>
    </location>
</feature>
<feature type="region of interest" description="G1" evidence="1">
    <location>
        <begin position="19"/>
        <end position="26"/>
    </location>
</feature>
<feature type="region of interest" description="G2" evidence="1">
    <location>
        <begin position="60"/>
        <end position="64"/>
    </location>
</feature>
<feature type="region of interest" description="G3" evidence="1">
    <location>
        <begin position="81"/>
        <end position="84"/>
    </location>
</feature>
<feature type="region of interest" description="G4" evidence="1">
    <location>
        <begin position="136"/>
        <end position="139"/>
    </location>
</feature>
<feature type="region of interest" description="G5" evidence="1">
    <location>
        <begin position="174"/>
        <end position="176"/>
    </location>
</feature>
<feature type="binding site" evidence="2">
    <location>
        <begin position="19"/>
        <end position="26"/>
    </location>
    <ligand>
        <name>GTP</name>
        <dbReference type="ChEBI" id="CHEBI:37565"/>
    </ligand>
</feature>
<feature type="binding site" evidence="2">
    <location>
        <position position="26"/>
    </location>
    <ligand>
        <name>Mg(2+)</name>
        <dbReference type="ChEBI" id="CHEBI:18420"/>
    </ligand>
</feature>
<feature type="binding site" evidence="2">
    <location>
        <begin position="81"/>
        <end position="85"/>
    </location>
    <ligand>
        <name>GTP</name>
        <dbReference type="ChEBI" id="CHEBI:37565"/>
    </ligand>
</feature>
<feature type="binding site" evidence="2">
    <location>
        <begin position="136"/>
        <end position="139"/>
    </location>
    <ligand>
        <name>GTP</name>
        <dbReference type="ChEBI" id="CHEBI:37565"/>
    </ligand>
</feature>